<comment type="function">
    <text evidence="3">May have antimicrobial properties, like most ant linear peptides.</text>
</comment>
<comment type="subcellular location">
    <subcellularLocation>
        <location evidence="4">Secreted</location>
    </subcellularLocation>
</comment>
<comment type="tissue specificity">
    <text evidence="4">Expressed by the venom gland.</text>
</comment>
<feature type="chain" id="PRO_0000447110" description="U1-poneritoxin-Na2a" evidence="4">
    <location>
        <begin position="1"/>
        <end position="34"/>
    </location>
</feature>
<keyword id="KW-0929">Antimicrobial</keyword>
<keyword id="KW-0903">Direct protein sequencing</keyword>
<keyword id="KW-0964">Secreted</keyword>
<dbReference type="SMR" id="P0DSL5"/>
<dbReference type="GO" id="GO:0005576">
    <property type="term" value="C:extracellular region"/>
    <property type="evidence" value="ECO:0007669"/>
    <property type="project" value="UniProtKB-SubCell"/>
</dbReference>
<accession>P0DSL5</accession>
<sequence length="34" mass="3912">GKEKDVFMDKLRDAGAAGIDYLKHFTHHIVKKKN</sequence>
<reference key="1">
    <citation type="journal article" date="2014" name="Toxicon">
        <title>Diversity of peptide toxins from stinging ant venoms.</title>
        <authorList>
            <person name="Aili S.R."/>
            <person name="Touchard A."/>
            <person name="Escoubas P."/>
            <person name="Padula M.P."/>
            <person name="Orivel J."/>
            <person name="Dejean A."/>
            <person name="Nicholson G.M."/>
        </authorList>
    </citation>
    <scope>REVIEW</scope>
    <scope>PROTEIN SEQUENCE</scope>
</reference>
<reference key="2">
    <citation type="journal article" date="2016" name="Toxins">
        <title>The biochemical toxin arsenal from ant venoms.</title>
        <authorList>
            <person name="Touchard A."/>
            <person name="Aili S.R."/>
            <person name="Fox E.G."/>
            <person name="Escoubas P."/>
            <person name="Orivel J."/>
            <person name="Nicholson G.M."/>
            <person name="Dejean A."/>
        </authorList>
    </citation>
    <scope>REVIEW</scope>
    <scope>NOMENCLATURE</scope>
</reference>
<protein>
    <recommendedName>
        <fullName evidence="2">U1-poneritoxin-Na2a</fullName>
        <shortName evidence="2">U1-PONTX-Na2a</shortName>
    </recommendedName>
    <alternativeName>
        <fullName evidence="3">Poneratoxin</fullName>
    </alternativeName>
    <alternativeName>
        <fullName evidence="1">Ponericin Pa IV1</fullName>
    </alternativeName>
</protein>
<proteinExistence type="evidence at protein level"/>
<organism>
    <name type="scientific">Neoponera apicalis</name>
    <name type="common">Ant</name>
    <name type="synonym">Pachycondyla apicalis</name>
    <dbReference type="NCBI Taxonomy" id="2320211"/>
    <lineage>
        <taxon>Eukaryota</taxon>
        <taxon>Metazoa</taxon>
        <taxon>Ecdysozoa</taxon>
        <taxon>Arthropoda</taxon>
        <taxon>Hexapoda</taxon>
        <taxon>Insecta</taxon>
        <taxon>Pterygota</taxon>
        <taxon>Neoptera</taxon>
        <taxon>Endopterygota</taxon>
        <taxon>Hymenoptera</taxon>
        <taxon>Apocrita</taxon>
        <taxon>Aculeata</taxon>
        <taxon>Formicoidea</taxon>
        <taxon>Formicidae</taxon>
        <taxon>Ponerinae</taxon>
        <taxon>Ponerini</taxon>
        <taxon>Neoponera</taxon>
    </lineage>
</organism>
<name>TX2A_NEOAP</name>
<evidence type="ECO:0000303" key="1">
    <source>
    </source>
</evidence>
<evidence type="ECO:0000303" key="2">
    <source>
    </source>
</evidence>
<evidence type="ECO:0000305" key="3"/>
<evidence type="ECO:0000305" key="4">
    <source>
    </source>
</evidence>